<gene>
    <name type="primary">MSN5</name>
    <name type="ordered locus">YDR335W</name>
    <name type="ORF">D9651.5</name>
</gene>
<reference key="1">
    <citation type="submission" date="1996-03" db="EMBL/GenBank/DDBJ databases">
        <authorList>
            <person name="Alepuz P.M."/>
            <person name="Estruch F."/>
        </authorList>
    </citation>
    <scope>NUCLEOTIDE SEQUENCE</scope>
    <source>
        <strain>ATCC 204508 / S288c</strain>
    </source>
</reference>
<reference key="2">
    <citation type="journal article" date="1997" name="Nature">
        <title>The nucleotide sequence of Saccharomyces cerevisiae chromosome IV.</title>
        <authorList>
            <person name="Jacq C."/>
            <person name="Alt-Moerbe J."/>
            <person name="Andre B."/>
            <person name="Arnold W."/>
            <person name="Bahr A."/>
            <person name="Ballesta J.P.G."/>
            <person name="Bargues M."/>
            <person name="Baron L."/>
            <person name="Becker A."/>
            <person name="Biteau N."/>
            <person name="Bloecker H."/>
            <person name="Blugeon C."/>
            <person name="Boskovic J."/>
            <person name="Brandt P."/>
            <person name="Brueckner M."/>
            <person name="Buitrago M.J."/>
            <person name="Coster F."/>
            <person name="Delaveau T."/>
            <person name="del Rey F."/>
            <person name="Dujon B."/>
            <person name="Eide L.G."/>
            <person name="Garcia-Cantalejo J.M."/>
            <person name="Goffeau A."/>
            <person name="Gomez-Peris A."/>
            <person name="Granotier C."/>
            <person name="Hanemann V."/>
            <person name="Hankeln T."/>
            <person name="Hoheisel J.D."/>
            <person name="Jaeger W."/>
            <person name="Jimenez A."/>
            <person name="Jonniaux J.-L."/>
            <person name="Kraemer C."/>
            <person name="Kuester H."/>
            <person name="Laamanen P."/>
            <person name="Legros Y."/>
            <person name="Louis E.J."/>
            <person name="Moeller-Rieker S."/>
            <person name="Monnet A."/>
            <person name="Moro M."/>
            <person name="Mueller-Auer S."/>
            <person name="Nussbaumer B."/>
            <person name="Paricio N."/>
            <person name="Paulin L."/>
            <person name="Perea J."/>
            <person name="Perez-Alonso M."/>
            <person name="Perez-Ortin J.E."/>
            <person name="Pohl T.M."/>
            <person name="Prydz H."/>
            <person name="Purnelle B."/>
            <person name="Rasmussen S.W."/>
            <person name="Remacha M.A."/>
            <person name="Revuelta J.L."/>
            <person name="Rieger M."/>
            <person name="Salom D."/>
            <person name="Saluz H.P."/>
            <person name="Saiz J.E."/>
            <person name="Saren A.-M."/>
            <person name="Schaefer M."/>
            <person name="Scharfe M."/>
            <person name="Schmidt E.R."/>
            <person name="Schneider C."/>
            <person name="Scholler P."/>
            <person name="Schwarz S."/>
            <person name="Soler-Mira A."/>
            <person name="Urrestarazu L.A."/>
            <person name="Verhasselt P."/>
            <person name="Vissers S."/>
            <person name="Voet M."/>
            <person name="Volckaert G."/>
            <person name="Wagner G."/>
            <person name="Wambutt R."/>
            <person name="Wedler E."/>
            <person name="Wedler H."/>
            <person name="Woelfl S."/>
            <person name="Harris D.E."/>
            <person name="Bowman S."/>
            <person name="Brown D."/>
            <person name="Churcher C.M."/>
            <person name="Connor R."/>
            <person name="Dedman K."/>
            <person name="Gentles S."/>
            <person name="Hamlin N."/>
            <person name="Hunt S."/>
            <person name="Jones L."/>
            <person name="McDonald S."/>
            <person name="Murphy L.D."/>
            <person name="Niblett D."/>
            <person name="Odell C."/>
            <person name="Oliver K."/>
            <person name="Rajandream M.A."/>
            <person name="Richards C."/>
            <person name="Shore L."/>
            <person name="Walsh S.V."/>
            <person name="Barrell B.G."/>
            <person name="Dietrich F.S."/>
            <person name="Mulligan J.T."/>
            <person name="Allen E."/>
            <person name="Araujo R."/>
            <person name="Aviles E."/>
            <person name="Berno A."/>
            <person name="Carpenter J."/>
            <person name="Chen E."/>
            <person name="Cherry J.M."/>
            <person name="Chung E."/>
            <person name="Duncan M."/>
            <person name="Hunicke-Smith S."/>
            <person name="Hyman R.W."/>
            <person name="Komp C."/>
            <person name="Lashkari D."/>
            <person name="Lew H."/>
            <person name="Lin D."/>
            <person name="Mosedale D."/>
            <person name="Nakahara K."/>
            <person name="Namath A."/>
            <person name="Oefner P."/>
            <person name="Oh C."/>
            <person name="Petel F.X."/>
            <person name="Roberts D."/>
            <person name="Schramm S."/>
            <person name="Schroeder M."/>
            <person name="Shogren T."/>
            <person name="Shroff N."/>
            <person name="Winant A."/>
            <person name="Yelton M.A."/>
            <person name="Botstein D."/>
            <person name="Davis R.W."/>
            <person name="Johnston M."/>
            <person name="Andrews S."/>
            <person name="Brinkman R."/>
            <person name="Cooper J."/>
            <person name="Ding H."/>
            <person name="Du Z."/>
            <person name="Favello A."/>
            <person name="Fulton L."/>
            <person name="Gattung S."/>
            <person name="Greco T."/>
            <person name="Hallsworth K."/>
            <person name="Hawkins J."/>
            <person name="Hillier L.W."/>
            <person name="Jier M."/>
            <person name="Johnson D."/>
            <person name="Johnston L."/>
            <person name="Kirsten J."/>
            <person name="Kucaba T."/>
            <person name="Langston Y."/>
            <person name="Latreille P."/>
            <person name="Le T."/>
            <person name="Mardis E."/>
            <person name="Menezes S."/>
            <person name="Miller N."/>
            <person name="Nhan M."/>
            <person name="Pauley A."/>
            <person name="Peluso D."/>
            <person name="Rifkin L."/>
            <person name="Riles L."/>
            <person name="Taich A."/>
            <person name="Trevaskis E."/>
            <person name="Vignati D."/>
            <person name="Wilcox L."/>
            <person name="Wohldman P."/>
            <person name="Vaudin M."/>
            <person name="Wilson R."/>
            <person name="Waterston R."/>
            <person name="Albermann K."/>
            <person name="Hani J."/>
            <person name="Heumann K."/>
            <person name="Kleine K."/>
            <person name="Mewes H.-W."/>
            <person name="Zollner A."/>
            <person name="Zaccaria P."/>
        </authorList>
    </citation>
    <scope>NUCLEOTIDE SEQUENCE [LARGE SCALE GENOMIC DNA]</scope>
    <source>
        <strain>ATCC 204508 / S288c</strain>
    </source>
</reference>
<reference key="3">
    <citation type="journal article" date="2014" name="G3 (Bethesda)">
        <title>The reference genome sequence of Saccharomyces cerevisiae: Then and now.</title>
        <authorList>
            <person name="Engel S.R."/>
            <person name="Dietrich F.S."/>
            <person name="Fisk D.G."/>
            <person name="Binkley G."/>
            <person name="Balakrishnan R."/>
            <person name="Costanzo M.C."/>
            <person name="Dwight S.S."/>
            <person name="Hitz B.C."/>
            <person name="Karra K."/>
            <person name="Nash R.S."/>
            <person name="Weng S."/>
            <person name="Wong E.D."/>
            <person name="Lloyd P."/>
            <person name="Skrzypek M.S."/>
            <person name="Miyasato S.R."/>
            <person name="Simison M."/>
            <person name="Cherry J.M."/>
        </authorList>
    </citation>
    <scope>GENOME REANNOTATION</scope>
    <source>
        <strain>ATCC 204508 / S288c</strain>
    </source>
</reference>
<reference key="4">
    <citation type="journal article" date="2003" name="Nature">
        <title>Global analysis of protein expression in yeast.</title>
        <authorList>
            <person name="Ghaemmaghami S."/>
            <person name="Huh W.-K."/>
            <person name="Bower K."/>
            <person name="Howson R.W."/>
            <person name="Belle A."/>
            <person name="Dephoure N."/>
            <person name="O'Shea E.K."/>
            <person name="Weissman J.S."/>
        </authorList>
    </citation>
    <scope>LEVEL OF PROTEIN EXPRESSION [LARGE SCALE ANALYSIS]</scope>
</reference>
<reference key="5">
    <citation type="journal article" date="2007" name="EMBO J.">
        <title>Cex1p is a novel cytoplasmic component of the Saccharomyces cerevisiae nuclear tRNA export machinery.</title>
        <authorList>
            <person name="McGuire A.T."/>
            <person name="Mangroo D."/>
        </authorList>
    </citation>
    <scope>INTERACTION WITH CEX1</scope>
</reference>
<reference key="6">
    <citation type="journal article" date="2012" name="Proc. Natl. Acad. Sci. U.S.A.">
        <title>N-terminal acetylome analyses and functional insights of the N-terminal acetyltransferase NatB.</title>
        <authorList>
            <person name="Van Damme P."/>
            <person name="Lasa M."/>
            <person name="Polevoda B."/>
            <person name="Gazquez C."/>
            <person name="Elosegui-Artola A."/>
            <person name="Kim D.S."/>
            <person name="De Juan-Pardo E."/>
            <person name="Demeyer K."/>
            <person name="Hole K."/>
            <person name="Larrea E."/>
            <person name="Timmerman E."/>
            <person name="Prieto J."/>
            <person name="Arnesen T."/>
            <person name="Sherman F."/>
            <person name="Gevaert K."/>
            <person name="Aldabe R."/>
        </authorList>
    </citation>
    <scope>IDENTIFICATION BY MASS SPECTROMETRY [LARGE SCALE ANALYSIS]</scope>
</reference>
<comment type="subunit">
    <text evidence="3">Interacts with CEX1.</text>
</comment>
<comment type="interaction">
    <interactant intactId="EBI-11420">
        <id>P52918</id>
    </interactant>
    <interactant intactId="EBI-13378">
        <id>P07270</id>
        <label>PHO4</label>
    </interactant>
    <organismsDiffer>false</organismsDiffer>
    <experiments>2</experiments>
</comment>
<comment type="miscellaneous">
    <text evidence="2">Present with 3500 molecules/cell in log phase SD medium.</text>
</comment>
<sequence length="1224" mass="142118">MDSTGASQIVSALDVIYSPKSNNSQRQEAQKFLDEVKLCSESPFWGYEIALQNPTNSILKYFGLGLLDHAVKKNWNDYDEGKRVALRKWVMELNFGVQDYDTRYIKEKLATLWVEVAKRTWGEALKQTNPTEEQLLTSWVDMDNNLFELWNINQSSRELALIIFRILFEDVFLLDDLIVLKRMTVIQPLCVMIVCPIEVFAIKYKFSDKWTKFKANEEGWFSVWIPELNNALQQNNSEYIIRLLETLKTCLNWPLTEVIVRNDVLSSLLTCLSSNIPRAQSMALDSIHILLTRPYSNESHYQMTIDRVFDNMDLLDSVYESLLFDPTDDIDETKYPIIKKFVDMISCLYVCVPKIKETNGQIQKYFKLVLKTTYNPSLIVSGLTLDLWCTCLRNDEYLPKLEKYVIPDLLQFAADALVYYEQIDGHISKKFAEIDFQSKSEFQTFCSTYRKRIRDIIRLISCVELDLTYDWLNNRLNNYFSSPFGQQVLSSTFLDHKLEPYLGALSQYMIVECFINGCIRWKIWYPTGDDYDEKLDSILQKLEILSNQLIALNLREPLLLKKQIQNFALFLTMLKDNVLFTLLEKIITSATMDYPEINLEERGAESDAVRDLRYACGIELNRMALLMPESLKKIYPDLESVIARIMPNLSYHEKISFKSFLLIIVLKSSLDMKEERFAAIVDPELLAWSDKTTVVGLSDLHWFMERLGIVQIAEYFQRRDIDENSDLLSIPIDDEGKELKSELTKRWQSLFPVRATRMFIHYSMQSIKTDEEFKMLQDLWRPRIVPILPYITRLLYQLQSYHDPDNWKGLPTVVQSFVKYSTIERFWEAGASNKSKDEFIDEHMKAMQTLRDFADSVGHIIRYTREYTLLVLSAISSLGSVFYLLDESPDLLLNSIAIFKPGSNEISPGVSTHGWKHIMNIAIRPILKGCPKDCLGKFMPAFLPKLFEILDLLLCQKWSSHMNDMDMNPVPTDDDQMTEEILEENLLRQLTTVVVRIVIDCVGQGNANPNSAKSRLNNHQMEMRKIIFNDLNTLAPFLKLLNHLISFKDTKCSFNSILVMKCCLTSVLNQNNTVDEYFTFEVMKNLLLNVLCNSAFKDSFHEALYAFTVIFLTLCKEYPSARAFLFEISNGYNIDELYRNLRSVDEYKTQRALMIDFIDWVKSTSGKEDGNVDHAGDERKRQEKREAILKKANERLIKKNKENGDMLDDPNIEDGAVGNLFDDN</sequence>
<evidence type="ECO:0000256" key="1">
    <source>
        <dbReference type="SAM" id="MobiDB-lite"/>
    </source>
</evidence>
<evidence type="ECO:0000269" key="2">
    <source>
    </source>
</evidence>
<evidence type="ECO:0000269" key="3">
    <source>
    </source>
</evidence>
<evidence type="ECO:0000305" key="4"/>
<protein>
    <recommendedName>
        <fullName>Protein MSN5</fullName>
    </recommendedName>
</protein>
<feature type="chain" id="PRO_0000096599" description="Protein MSN5">
    <location>
        <begin position="1"/>
        <end position="1224"/>
    </location>
</feature>
<feature type="region of interest" description="Disordered" evidence="1">
    <location>
        <begin position="1200"/>
        <end position="1224"/>
    </location>
</feature>
<feature type="sequence conflict" description="In Ref. 1; CAA63705." evidence="4" ref="1">
    <original>D</original>
    <variation>G</variation>
    <location>
        <position position="886"/>
    </location>
</feature>
<feature type="sequence conflict" description="In Ref. 1; CAA63705." evidence="4" ref="1">
    <original>S</original>
    <variation>R</variation>
    <location>
        <position position="1011"/>
    </location>
</feature>
<dbReference type="EMBL" id="X93302">
    <property type="protein sequence ID" value="CAA63705.1"/>
    <property type="molecule type" value="mRNA"/>
</dbReference>
<dbReference type="EMBL" id="U51032">
    <property type="protein sequence ID" value="AAB64771.1"/>
    <property type="molecule type" value="Genomic_DNA"/>
</dbReference>
<dbReference type="EMBL" id="BK006938">
    <property type="protein sequence ID" value="DAA12177.1"/>
    <property type="molecule type" value="Genomic_DNA"/>
</dbReference>
<dbReference type="PIR" id="S70100">
    <property type="entry name" value="S70100"/>
</dbReference>
<dbReference type="RefSeq" id="NP_010622.1">
    <property type="nucleotide sequence ID" value="NM_001180643.1"/>
</dbReference>
<dbReference type="SMR" id="P52918"/>
<dbReference type="BioGRID" id="32392">
    <property type="interactions" value="431"/>
</dbReference>
<dbReference type="DIP" id="DIP-1459N"/>
<dbReference type="FunCoup" id="P52918">
    <property type="interactions" value="918"/>
</dbReference>
<dbReference type="IntAct" id="P52918">
    <property type="interactions" value="30"/>
</dbReference>
<dbReference type="MINT" id="P52918"/>
<dbReference type="STRING" id="4932.YDR335W"/>
<dbReference type="TCDB" id="9.A.50.1.1">
    <property type="family name" value="the nuclear t-rna exporter (trna-e) family"/>
</dbReference>
<dbReference type="CarbonylDB" id="P52918"/>
<dbReference type="iPTMnet" id="P52918"/>
<dbReference type="PaxDb" id="4932-YDR335W"/>
<dbReference type="PeptideAtlas" id="P52918"/>
<dbReference type="EnsemblFungi" id="YDR335W_mRNA">
    <property type="protein sequence ID" value="YDR335W"/>
    <property type="gene ID" value="YDR335W"/>
</dbReference>
<dbReference type="GeneID" id="851935"/>
<dbReference type="KEGG" id="sce:YDR335W"/>
<dbReference type="AGR" id="SGD:S000002743"/>
<dbReference type="SGD" id="S000002743">
    <property type="gene designation" value="MSN5"/>
</dbReference>
<dbReference type="VEuPathDB" id="FungiDB:YDR335W"/>
<dbReference type="eggNOG" id="KOG2020">
    <property type="taxonomic scope" value="Eukaryota"/>
</dbReference>
<dbReference type="GeneTree" id="ENSGT00940000153408"/>
<dbReference type="HOGENOM" id="CLU_003712_0_0_1"/>
<dbReference type="InParanoid" id="P52918"/>
<dbReference type="OMA" id="IAKRSWG"/>
<dbReference type="OrthoDB" id="2215036at2759"/>
<dbReference type="BioCyc" id="YEAST:G3O-29891-MONOMER"/>
<dbReference type="BioGRID-ORCS" id="851935">
    <property type="hits" value="6 hits in 10 CRISPR screens"/>
</dbReference>
<dbReference type="PRO" id="PR:P52918"/>
<dbReference type="Proteomes" id="UP000002311">
    <property type="component" value="Chromosome IV"/>
</dbReference>
<dbReference type="RNAct" id="P52918">
    <property type="molecule type" value="protein"/>
</dbReference>
<dbReference type="GO" id="GO:0005737">
    <property type="term" value="C:cytoplasm"/>
    <property type="evidence" value="ECO:0000314"/>
    <property type="project" value="SGD"/>
</dbReference>
<dbReference type="GO" id="GO:0005634">
    <property type="term" value="C:nucleus"/>
    <property type="evidence" value="ECO:0000314"/>
    <property type="project" value="SGD"/>
</dbReference>
<dbReference type="GO" id="GO:0042565">
    <property type="term" value="C:RNA nuclear export complex"/>
    <property type="evidence" value="ECO:0000318"/>
    <property type="project" value="GO_Central"/>
</dbReference>
<dbReference type="GO" id="GO:0005049">
    <property type="term" value="F:nuclear export signal receptor activity"/>
    <property type="evidence" value="ECO:0000314"/>
    <property type="project" value="SGD"/>
</dbReference>
<dbReference type="GO" id="GO:0003723">
    <property type="term" value="F:RNA binding"/>
    <property type="evidence" value="ECO:0000318"/>
    <property type="project" value="GO_Central"/>
</dbReference>
<dbReference type="GO" id="GO:0006611">
    <property type="term" value="P:protein export from nucleus"/>
    <property type="evidence" value="ECO:0000314"/>
    <property type="project" value="SGD"/>
</dbReference>
<dbReference type="GO" id="GO:0006405">
    <property type="term" value="P:RNA export from nucleus"/>
    <property type="evidence" value="ECO:0000318"/>
    <property type="project" value="GO_Central"/>
</dbReference>
<dbReference type="GO" id="GO:0071528">
    <property type="term" value="P:tRNA re-export from nucleus"/>
    <property type="evidence" value="ECO:0000316"/>
    <property type="project" value="SGD"/>
</dbReference>
<dbReference type="FunFam" id="1.25.10.10:FF:000559">
    <property type="entry name" value="Msn5p"/>
    <property type="match status" value="1"/>
</dbReference>
<dbReference type="Gene3D" id="1.25.10.10">
    <property type="entry name" value="Leucine-rich Repeat Variant"/>
    <property type="match status" value="1"/>
</dbReference>
<dbReference type="InterPro" id="IPR011989">
    <property type="entry name" value="ARM-like"/>
</dbReference>
<dbReference type="InterPro" id="IPR016024">
    <property type="entry name" value="ARM-type_fold"/>
</dbReference>
<dbReference type="InterPro" id="IPR045478">
    <property type="entry name" value="Exportin-5_C"/>
</dbReference>
<dbReference type="InterPro" id="IPR045065">
    <property type="entry name" value="XPO1/5"/>
</dbReference>
<dbReference type="PANTHER" id="PTHR11223">
    <property type="entry name" value="EXPORTIN 1/5"/>
    <property type="match status" value="1"/>
</dbReference>
<dbReference type="PANTHER" id="PTHR11223:SF3">
    <property type="entry name" value="EXPORTIN-5"/>
    <property type="match status" value="1"/>
</dbReference>
<dbReference type="Pfam" id="PF19273">
    <property type="entry name" value="Exportin-5"/>
    <property type="match status" value="1"/>
</dbReference>
<dbReference type="SUPFAM" id="SSF48371">
    <property type="entry name" value="ARM repeat"/>
    <property type="match status" value="1"/>
</dbReference>
<keyword id="KW-1185">Reference proteome</keyword>
<proteinExistence type="evidence at protein level"/>
<accession>P52918</accession>
<accession>D6VSW7</accession>
<organism>
    <name type="scientific">Saccharomyces cerevisiae (strain ATCC 204508 / S288c)</name>
    <name type="common">Baker's yeast</name>
    <dbReference type="NCBI Taxonomy" id="559292"/>
    <lineage>
        <taxon>Eukaryota</taxon>
        <taxon>Fungi</taxon>
        <taxon>Dikarya</taxon>
        <taxon>Ascomycota</taxon>
        <taxon>Saccharomycotina</taxon>
        <taxon>Saccharomycetes</taxon>
        <taxon>Saccharomycetales</taxon>
        <taxon>Saccharomycetaceae</taxon>
        <taxon>Saccharomyces</taxon>
    </lineage>
</organism>
<name>MSN5_YEAST</name>